<proteinExistence type="inferred from homology"/>
<name>HICB_ECO57</name>
<gene>
    <name type="primary">hicB</name>
    <name type="ordered locus">Z2281</name>
    <name type="ordered locus">ECs2042</name>
</gene>
<evidence type="ECO:0000250" key="1"/>
<evidence type="ECO:0000255" key="2">
    <source>
        <dbReference type="PROSITE-ProRule" id="PRU00257"/>
    </source>
</evidence>
<evidence type="ECO:0000305" key="3"/>
<accession>P67698</accession>
<accession>P76107</accession>
<keyword id="KW-0238">DNA-binding</keyword>
<keyword id="KW-1185">Reference proteome</keyword>
<keyword id="KW-0678">Repressor</keyword>
<keyword id="KW-0346">Stress response</keyword>
<keyword id="KW-1277">Toxin-antitoxin system</keyword>
<keyword id="KW-0804">Transcription</keyword>
<keyword id="KW-0805">Transcription regulation</keyword>
<comment type="function">
    <text evidence="1">Antitoxin component of a type II toxin-antitoxin (TA) system. Functions as an mRNA interferase antitoxin preventing effects of the HicA toxin (By similarity).</text>
</comment>
<comment type="subunit">
    <text evidence="1">Probably forms a complex with the probable mRNA interferase HicA; when complexed with HicA inhibits the toxin activity.</text>
</comment>
<comment type="similarity">
    <text evidence="3">Belongs to the HicB antitoxin family.</text>
</comment>
<comment type="sequence caution" evidence="3">
    <conflict type="erroneous initiation">
        <sequence resource="EMBL-CDS" id="AAG56337"/>
    </conflict>
    <text>Extended N-terminus.</text>
</comment>
<comment type="sequence caution" evidence="3">
    <conflict type="erroneous initiation">
        <sequence resource="EMBL-CDS" id="BAB35465"/>
    </conflict>
    <text>Extended N-terminus.</text>
</comment>
<protein>
    <recommendedName>
        <fullName>Antitoxin HicB</fullName>
    </recommendedName>
</protein>
<sequence>MRYPVTLTPAPEGGYMVSFVDIPEALTQGETVAEAMEAAKDALLTAFDFYFEDNELIPLPSPLNSHDHFIEVPLSVASKVLLLNAFLQSEITQQELARRIGKPKQEITRLFNLHHATKIDAVQLAAKALGKELSLVMV</sequence>
<organism>
    <name type="scientific">Escherichia coli O157:H7</name>
    <dbReference type="NCBI Taxonomy" id="83334"/>
    <lineage>
        <taxon>Bacteria</taxon>
        <taxon>Pseudomonadati</taxon>
        <taxon>Pseudomonadota</taxon>
        <taxon>Gammaproteobacteria</taxon>
        <taxon>Enterobacterales</taxon>
        <taxon>Enterobacteriaceae</taxon>
        <taxon>Escherichia</taxon>
    </lineage>
</organism>
<dbReference type="EMBL" id="AE005174">
    <property type="protein sequence ID" value="AAG56337.1"/>
    <property type="status" value="ALT_INIT"/>
    <property type="molecule type" value="Genomic_DNA"/>
</dbReference>
<dbReference type="EMBL" id="BA000007">
    <property type="protein sequence ID" value="BAB35465.1"/>
    <property type="status" value="ALT_INIT"/>
    <property type="molecule type" value="Genomic_DNA"/>
</dbReference>
<dbReference type="PIR" id="B90884">
    <property type="entry name" value="B90884"/>
</dbReference>
<dbReference type="RefSeq" id="NP_310069.2">
    <property type="nucleotide sequence ID" value="NC_002695.1"/>
</dbReference>
<dbReference type="RefSeq" id="WP_001270286.1">
    <property type="nucleotide sequence ID" value="NZ_VOAI01000022.1"/>
</dbReference>
<dbReference type="SMR" id="P67698"/>
<dbReference type="STRING" id="155864.Z2281"/>
<dbReference type="GeneID" id="93775583"/>
<dbReference type="KEGG" id="ece:Z2281"/>
<dbReference type="KEGG" id="ecs:ECs_2042"/>
<dbReference type="PATRIC" id="fig|386585.9.peg.2142"/>
<dbReference type="eggNOG" id="COG1598">
    <property type="taxonomic scope" value="Bacteria"/>
</dbReference>
<dbReference type="HOGENOM" id="CLU_140890_2_0_6"/>
<dbReference type="OMA" id="HNAMIEK"/>
<dbReference type="Proteomes" id="UP000000558">
    <property type="component" value="Chromosome"/>
</dbReference>
<dbReference type="Proteomes" id="UP000002519">
    <property type="component" value="Chromosome"/>
</dbReference>
<dbReference type="GO" id="GO:0003677">
    <property type="term" value="F:DNA binding"/>
    <property type="evidence" value="ECO:0007669"/>
    <property type="project" value="UniProtKB-KW"/>
</dbReference>
<dbReference type="CDD" id="cd00093">
    <property type="entry name" value="HTH_XRE"/>
    <property type="match status" value="1"/>
</dbReference>
<dbReference type="Gene3D" id="3.30.160.250">
    <property type="match status" value="1"/>
</dbReference>
<dbReference type="InterPro" id="IPR001387">
    <property type="entry name" value="Cro/C1-type_HTH"/>
</dbReference>
<dbReference type="InterPro" id="IPR031807">
    <property type="entry name" value="HicB-like"/>
</dbReference>
<dbReference type="InterPro" id="IPR010982">
    <property type="entry name" value="Lambda_DNA-bd_dom_sf"/>
</dbReference>
<dbReference type="InterPro" id="IPR051404">
    <property type="entry name" value="TA_system_antitoxin"/>
</dbReference>
<dbReference type="InterPro" id="IPR035069">
    <property type="entry name" value="TTHA1013/TTHA0281-like"/>
</dbReference>
<dbReference type="PANTHER" id="PTHR34504">
    <property type="entry name" value="ANTITOXIN HICB"/>
    <property type="match status" value="1"/>
</dbReference>
<dbReference type="PANTHER" id="PTHR34504:SF4">
    <property type="entry name" value="ANTITOXIN HICB"/>
    <property type="match status" value="1"/>
</dbReference>
<dbReference type="Pfam" id="PF15919">
    <property type="entry name" value="HicB_lk_antitox"/>
    <property type="match status" value="1"/>
</dbReference>
<dbReference type="Pfam" id="PF01381">
    <property type="entry name" value="HTH_3"/>
    <property type="match status" value="1"/>
</dbReference>
<dbReference type="SMART" id="SM00530">
    <property type="entry name" value="HTH_XRE"/>
    <property type="match status" value="1"/>
</dbReference>
<dbReference type="SUPFAM" id="SSF47413">
    <property type="entry name" value="lambda repressor-like DNA-binding domains"/>
    <property type="match status" value="1"/>
</dbReference>
<dbReference type="SUPFAM" id="SSF143100">
    <property type="entry name" value="TTHA1013/TTHA0281-like"/>
    <property type="match status" value="1"/>
</dbReference>
<dbReference type="PROSITE" id="PS50943">
    <property type="entry name" value="HTH_CROC1"/>
    <property type="match status" value="1"/>
</dbReference>
<feature type="chain" id="PRO_0000149758" description="Antitoxin HicB">
    <location>
        <begin position="1"/>
        <end position="138"/>
    </location>
</feature>
<feature type="domain" description="HTH cro/C1-type" evidence="2">
    <location>
        <begin position="82"/>
        <end position="136"/>
    </location>
</feature>
<feature type="DNA-binding region" description="H-T-H motif" evidence="2">
    <location>
        <begin position="93"/>
        <end position="112"/>
    </location>
</feature>
<reference key="1">
    <citation type="journal article" date="2001" name="Nature">
        <title>Genome sequence of enterohaemorrhagic Escherichia coli O157:H7.</title>
        <authorList>
            <person name="Perna N.T."/>
            <person name="Plunkett G. III"/>
            <person name="Burland V."/>
            <person name="Mau B."/>
            <person name="Glasner J.D."/>
            <person name="Rose D.J."/>
            <person name="Mayhew G.F."/>
            <person name="Evans P.S."/>
            <person name="Gregor J."/>
            <person name="Kirkpatrick H.A."/>
            <person name="Posfai G."/>
            <person name="Hackett J."/>
            <person name="Klink S."/>
            <person name="Boutin A."/>
            <person name="Shao Y."/>
            <person name="Miller L."/>
            <person name="Grotbeck E.J."/>
            <person name="Davis N.W."/>
            <person name="Lim A."/>
            <person name="Dimalanta E.T."/>
            <person name="Potamousis K."/>
            <person name="Apodaca J."/>
            <person name="Anantharaman T.S."/>
            <person name="Lin J."/>
            <person name="Yen G."/>
            <person name="Schwartz D.C."/>
            <person name="Welch R.A."/>
            <person name="Blattner F.R."/>
        </authorList>
    </citation>
    <scope>NUCLEOTIDE SEQUENCE [LARGE SCALE GENOMIC DNA]</scope>
    <source>
        <strain>O157:H7 / EDL933 / ATCC 700927 / EHEC</strain>
    </source>
</reference>
<reference key="2">
    <citation type="journal article" date="2001" name="DNA Res.">
        <title>Complete genome sequence of enterohemorrhagic Escherichia coli O157:H7 and genomic comparison with a laboratory strain K-12.</title>
        <authorList>
            <person name="Hayashi T."/>
            <person name="Makino K."/>
            <person name="Ohnishi M."/>
            <person name="Kurokawa K."/>
            <person name="Ishii K."/>
            <person name="Yokoyama K."/>
            <person name="Han C.-G."/>
            <person name="Ohtsubo E."/>
            <person name="Nakayama K."/>
            <person name="Murata T."/>
            <person name="Tanaka M."/>
            <person name="Tobe T."/>
            <person name="Iida T."/>
            <person name="Takami H."/>
            <person name="Honda T."/>
            <person name="Sasakawa C."/>
            <person name="Ogasawara N."/>
            <person name="Yasunaga T."/>
            <person name="Kuhara S."/>
            <person name="Shiba T."/>
            <person name="Hattori M."/>
            <person name="Shinagawa H."/>
        </authorList>
    </citation>
    <scope>NUCLEOTIDE SEQUENCE [LARGE SCALE GENOMIC DNA]</scope>
    <source>
        <strain>O157:H7 / Sakai / RIMD 0509952 / EHEC</strain>
    </source>
</reference>